<proteinExistence type="inferred from homology"/>
<evidence type="ECO:0000255" key="1">
    <source>
        <dbReference type="HAMAP-Rule" id="MF_00530"/>
    </source>
</evidence>
<keyword id="KW-0066">ATP synthesis</keyword>
<keyword id="KW-0997">Cell inner membrane</keyword>
<keyword id="KW-1003">Cell membrane</keyword>
<keyword id="KW-0139">CF(1)</keyword>
<keyword id="KW-0375">Hydrogen ion transport</keyword>
<keyword id="KW-0406">Ion transport</keyword>
<keyword id="KW-0472">Membrane</keyword>
<keyword id="KW-0813">Transport</keyword>
<name>ATPE_PSEE4</name>
<accession>Q1I2I8</accession>
<dbReference type="EMBL" id="CT573326">
    <property type="protein sequence ID" value="CAK18148.1"/>
    <property type="molecule type" value="Genomic_DNA"/>
</dbReference>
<dbReference type="RefSeq" id="WP_011536500.1">
    <property type="nucleotide sequence ID" value="NC_008027.1"/>
</dbReference>
<dbReference type="SMR" id="Q1I2I8"/>
<dbReference type="STRING" id="384676.PSEEN5541"/>
<dbReference type="KEGG" id="pen:PSEEN5541"/>
<dbReference type="eggNOG" id="COG0355">
    <property type="taxonomic scope" value="Bacteria"/>
</dbReference>
<dbReference type="HOGENOM" id="CLU_084338_2_0_6"/>
<dbReference type="OrthoDB" id="9791445at2"/>
<dbReference type="Proteomes" id="UP000000658">
    <property type="component" value="Chromosome"/>
</dbReference>
<dbReference type="GO" id="GO:0005886">
    <property type="term" value="C:plasma membrane"/>
    <property type="evidence" value="ECO:0007669"/>
    <property type="project" value="UniProtKB-SubCell"/>
</dbReference>
<dbReference type="GO" id="GO:0045259">
    <property type="term" value="C:proton-transporting ATP synthase complex"/>
    <property type="evidence" value="ECO:0007669"/>
    <property type="project" value="UniProtKB-KW"/>
</dbReference>
<dbReference type="GO" id="GO:0005524">
    <property type="term" value="F:ATP binding"/>
    <property type="evidence" value="ECO:0007669"/>
    <property type="project" value="UniProtKB-UniRule"/>
</dbReference>
<dbReference type="GO" id="GO:0046933">
    <property type="term" value="F:proton-transporting ATP synthase activity, rotational mechanism"/>
    <property type="evidence" value="ECO:0007669"/>
    <property type="project" value="UniProtKB-UniRule"/>
</dbReference>
<dbReference type="CDD" id="cd12152">
    <property type="entry name" value="F1-ATPase_delta"/>
    <property type="match status" value="1"/>
</dbReference>
<dbReference type="FunFam" id="2.60.15.10:FF:000001">
    <property type="entry name" value="ATP synthase epsilon chain"/>
    <property type="match status" value="1"/>
</dbReference>
<dbReference type="Gene3D" id="1.20.5.440">
    <property type="entry name" value="ATP synthase delta/epsilon subunit, C-terminal domain"/>
    <property type="match status" value="1"/>
</dbReference>
<dbReference type="Gene3D" id="2.60.15.10">
    <property type="entry name" value="F0F1 ATP synthase delta/epsilon subunit, N-terminal"/>
    <property type="match status" value="1"/>
</dbReference>
<dbReference type="HAMAP" id="MF_00530">
    <property type="entry name" value="ATP_synth_epsil_bac"/>
    <property type="match status" value="1"/>
</dbReference>
<dbReference type="InterPro" id="IPR036794">
    <property type="entry name" value="ATP_F1_dsu/esu_C_sf"/>
</dbReference>
<dbReference type="InterPro" id="IPR001469">
    <property type="entry name" value="ATP_synth_F1_dsu/esu"/>
</dbReference>
<dbReference type="InterPro" id="IPR020546">
    <property type="entry name" value="ATP_synth_F1_dsu/esu_N"/>
</dbReference>
<dbReference type="InterPro" id="IPR020547">
    <property type="entry name" value="ATP_synth_F1_esu_C"/>
</dbReference>
<dbReference type="InterPro" id="IPR036771">
    <property type="entry name" value="ATPsynth_dsu/esu_N"/>
</dbReference>
<dbReference type="NCBIfam" id="TIGR01216">
    <property type="entry name" value="ATP_synt_epsi"/>
    <property type="match status" value="1"/>
</dbReference>
<dbReference type="NCBIfam" id="NF001847">
    <property type="entry name" value="PRK00571.1-4"/>
    <property type="match status" value="1"/>
</dbReference>
<dbReference type="PANTHER" id="PTHR13822">
    <property type="entry name" value="ATP SYNTHASE DELTA/EPSILON CHAIN"/>
    <property type="match status" value="1"/>
</dbReference>
<dbReference type="PANTHER" id="PTHR13822:SF10">
    <property type="entry name" value="ATP SYNTHASE EPSILON CHAIN, CHLOROPLASTIC"/>
    <property type="match status" value="1"/>
</dbReference>
<dbReference type="Pfam" id="PF00401">
    <property type="entry name" value="ATP-synt_DE"/>
    <property type="match status" value="1"/>
</dbReference>
<dbReference type="Pfam" id="PF02823">
    <property type="entry name" value="ATP-synt_DE_N"/>
    <property type="match status" value="1"/>
</dbReference>
<dbReference type="SUPFAM" id="SSF46604">
    <property type="entry name" value="Epsilon subunit of F1F0-ATP synthase C-terminal domain"/>
    <property type="match status" value="1"/>
</dbReference>
<dbReference type="SUPFAM" id="SSF51344">
    <property type="entry name" value="Epsilon subunit of F1F0-ATP synthase N-terminal domain"/>
    <property type="match status" value="1"/>
</dbReference>
<gene>
    <name evidence="1" type="primary">atpC</name>
    <name type="ordered locus">PSEEN5541</name>
</gene>
<feature type="chain" id="PRO_1000056522" description="ATP synthase epsilon chain">
    <location>
        <begin position="1"/>
        <end position="139"/>
    </location>
</feature>
<sequence>MAMTVHCDIVSAEGEIFSGLVEMVVAHGNLGDLGIAPGHAPLITNLKPGPITLTKQGGDREVFYISGGFLEVQPNMVKVLADTVQRAADLDEAQAQEALKAAENALNAKSSDFDYGAAAARLAEAAAQLRTVQQLRKGK</sequence>
<comment type="function">
    <text evidence="1">Produces ATP from ADP in the presence of a proton gradient across the membrane.</text>
</comment>
<comment type="subunit">
    <text evidence="1">F-type ATPases have 2 components, CF(1) - the catalytic core - and CF(0) - the membrane proton channel. CF(1) has five subunits: alpha(3), beta(3), gamma(1), delta(1), epsilon(1). CF(0) has three main subunits: a, b and c.</text>
</comment>
<comment type="subcellular location">
    <subcellularLocation>
        <location evidence="1">Cell inner membrane</location>
        <topology evidence="1">Peripheral membrane protein</topology>
    </subcellularLocation>
</comment>
<comment type="similarity">
    <text evidence="1">Belongs to the ATPase epsilon chain family.</text>
</comment>
<reference key="1">
    <citation type="journal article" date="2006" name="Nat. Biotechnol.">
        <title>Complete genome sequence of the entomopathogenic and metabolically versatile soil bacterium Pseudomonas entomophila.</title>
        <authorList>
            <person name="Vodovar N."/>
            <person name="Vallenet D."/>
            <person name="Cruveiller S."/>
            <person name="Rouy Z."/>
            <person name="Barbe V."/>
            <person name="Acosta C."/>
            <person name="Cattolico L."/>
            <person name="Jubin C."/>
            <person name="Lajus A."/>
            <person name="Segurens B."/>
            <person name="Vacherie B."/>
            <person name="Wincker P."/>
            <person name="Weissenbach J."/>
            <person name="Lemaitre B."/>
            <person name="Medigue C."/>
            <person name="Boccard F."/>
        </authorList>
    </citation>
    <scope>NUCLEOTIDE SEQUENCE [LARGE SCALE GENOMIC DNA]</scope>
    <source>
        <strain>L48</strain>
    </source>
</reference>
<organism>
    <name type="scientific">Pseudomonas entomophila (strain L48)</name>
    <dbReference type="NCBI Taxonomy" id="384676"/>
    <lineage>
        <taxon>Bacteria</taxon>
        <taxon>Pseudomonadati</taxon>
        <taxon>Pseudomonadota</taxon>
        <taxon>Gammaproteobacteria</taxon>
        <taxon>Pseudomonadales</taxon>
        <taxon>Pseudomonadaceae</taxon>
        <taxon>Pseudomonas</taxon>
    </lineage>
</organism>
<protein>
    <recommendedName>
        <fullName evidence="1">ATP synthase epsilon chain</fullName>
    </recommendedName>
    <alternativeName>
        <fullName evidence="1">ATP synthase F1 sector epsilon subunit</fullName>
    </alternativeName>
    <alternativeName>
        <fullName evidence="1">F-ATPase epsilon subunit</fullName>
    </alternativeName>
</protein>